<gene>
    <name evidence="1" type="primary">serS</name>
    <name type="ordered locus">Saci_1584</name>
</gene>
<dbReference type="EC" id="6.1.1.11" evidence="1"/>
<dbReference type="EMBL" id="CP000077">
    <property type="protein sequence ID" value="AAY80897.1"/>
    <property type="molecule type" value="Genomic_DNA"/>
</dbReference>
<dbReference type="RefSeq" id="WP_011278399.1">
    <property type="nucleotide sequence ID" value="NC_007181.1"/>
</dbReference>
<dbReference type="SMR" id="Q4J8I4"/>
<dbReference type="STRING" id="330779.Saci_1584"/>
<dbReference type="GeneID" id="14552077"/>
<dbReference type="GeneID" id="78441927"/>
<dbReference type="KEGG" id="sai:Saci_1584"/>
<dbReference type="PATRIC" id="fig|330779.12.peg.1524"/>
<dbReference type="eggNOG" id="arCOG00403">
    <property type="taxonomic scope" value="Archaea"/>
</dbReference>
<dbReference type="HOGENOM" id="CLU_023797_0_1_2"/>
<dbReference type="UniPathway" id="UPA00906">
    <property type="reaction ID" value="UER00895"/>
</dbReference>
<dbReference type="Proteomes" id="UP000001018">
    <property type="component" value="Chromosome"/>
</dbReference>
<dbReference type="GO" id="GO:0005737">
    <property type="term" value="C:cytoplasm"/>
    <property type="evidence" value="ECO:0007669"/>
    <property type="project" value="UniProtKB-SubCell"/>
</dbReference>
<dbReference type="GO" id="GO:0005524">
    <property type="term" value="F:ATP binding"/>
    <property type="evidence" value="ECO:0007669"/>
    <property type="project" value="UniProtKB-UniRule"/>
</dbReference>
<dbReference type="GO" id="GO:0004828">
    <property type="term" value="F:serine-tRNA ligase activity"/>
    <property type="evidence" value="ECO:0007669"/>
    <property type="project" value="UniProtKB-UniRule"/>
</dbReference>
<dbReference type="GO" id="GO:0016260">
    <property type="term" value="P:selenocysteine biosynthetic process"/>
    <property type="evidence" value="ECO:0007669"/>
    <property type="project" value="UniProtKB-UniRule"/>
</dbReference>
<dbReference type="GO" id="GO:0006434">
    <property type="term" value="P:seryl-tRNA aminoacylation"/>
    <property type="evidence" value="ECO:0007669"/>
    <property type="project" value="UniProtKB-UniRule"/>
</dbReference>
<dbReference type="CDD" id="cd00770">
    <property type="entry name" value="SerRS_core"/>
    <property type="match status" value="1"/>
</dbReference>
<dbReference type="FunFam" id="3.30.930.10:FF:000048">
    <property type="entry name" value="Serine--tRNA ligase"/>
    <property type="match status" value="1"/>
</dbReference>
<dbReference type="Gene3D" id="3.30.930.10">
    <property type="entry name" value="Bira Bifunctional Protein, Domain 2"/>
    <property type="match status" value="1"/>
</dbReference>
<dbReference type="Gene3D" id="1.10.287.40">
    <property type="entry name" value="Serine-tRNA synthetase, tRNA binding domain"/>
    <property type="match status" value="1"/>
</dbReference>
<dbReference type="HAMAP" id="MF_00176">
    <property type="entry name" value="Ser_tRNA_synth_type1"/>
    <property type="match status" value="1"/>
</dbReference>
<dbReference type="InterPro" id="IPR002314">
    <property type="entry name" value="aa-tRNA-synt_IIb"/>
</dbReference>
<dbReference type="InterPro" id="IPR006195">
    <property type="entry name" value="aa-tRNA-synth_II"/>
</dbReference>
<dbReference type="InterPro" id="IPR045864">
    <property type="entry name" value="aa-tRNA-synth_II/BPL/LPL"/>
</dbReference>
<dbReference type="InterPro" id="IPR002317">
    <property type="entry name" value="Ser-tRNA-ligase_type_1"/>
</dbReference>
<dbReference type="InterPro" id="IPR015866">
    <property type="entry name" value="Ser-tRNA-synth_1_N"/>
</dbReference>
<dbReference type="InterPro" id="IPR042103">
    <property type="entry name" value="SerRS_1_N_sf"/>
</dbReference>
<dbReference type="InterPro" id="IPR033729">
    <property type="entry name" value="SerRS_core"/>
</dbReference>
<dbReference type="InterPro" id="IPR010978">
    <property type="entry name" value="tRNA-bd_arm"/>
</dbReference>
<dbReference type="NCBIfam" id="TIGR00414">
    <property type="entry name" value="serS"/>
    <property type="match status" value="1"/>
</dbReference>
<dbReference type="PANTHER" id="PTHR11778">
    <property type="entry name" value="SERYL-TRNA SYNTHETASE"/>
    <property type="match status" value="1"/>
</dbReference>
<dbReference type="Pfam" id="PF02403">
    <property type="entry name" value="Seryl_tRNA_N"/>
    <property type="match status" value="1"/>
</dbReference>
<dbReference type="Pfam" id="PF00587">
    <property type="entry name" value="tRNA-synt_2b"/>
    <property type="match status" value="1"/>
</dbReference>
<dbReference type="PIRSF" id="PIRSF001529">
    <property type="entry name" value="Ser-tRNA-synth_IIa"/>
    <property type="match status" value="1"/>
</dbReference>
<dbReference type="PRINTS" id="PR00981">
    <property type="entry name" value="TRNASYNTHSER"/>
</dbReference>
<dbReference type="SUPFAM" id="SSF55681">
    <property type="entry name" value="Class II aaRS and biotin synthetases"/>
    <property type="match status" value="1"/>
</dbReference>
<dbReference type="SUPFAM" id="SSF46589">
    <property type="entry name" value="tRNA-binding arm"/>
    <property type="match status" value="1"/>
</dbReference>
<dbReference type="PROSITE" id="PS50862">
    <property type="entry name" value="AA_TRNA_LIGASE_II"/>
    <property type="match status" value="1"/>
</dbReference>
<reference key="1">
    <citation type="journal article" date="2005" name="J. Bacteriol.">
        <title>The genome of Sulfolobus acidocaldarius, a model organism of the Crenarchaeota.</title>
        <authorList>
            <person name="Chen L."/>
            <person name="Bruegger K."/>
            <person name="Skovgaard M."/>
            <person name="Redder P."/>
            <person name="She Q."/>
            <person name="Torarinsson E."/>
            <person name="Greve B."/>
            <person name="Awayez M."/>
            <person name="Zibat A."/>
            <person name="Klenk H.-P."/>
            <person name="Garrett R.A."/>
        </authorList>
    </citation>
    <scope>NUCLEOTIDE SEQUENCE [LARGE SCALE GENOMIC DNA]</scope>
    <source>
        <strain>ATCC 33909 / DSM 639 / JCM 8929 / NBRC 15157 / NCIMB 11770</strain>
    </source>
</reference>
<protein>
    <recommendedName>
        <fullName evidence="1">Serine--tRNA ligase</fullName>
        <ecNumber evidence="1">6.1.1.11</ecNumber>
    </recommendedName>
    <alternativeName>
        <fullName evidence="1">Seryl-tRNA synthetase</fullName>
        <shortName evidence="1">SerRS</shortName>
    </alternativeName>
    <alternativeName>
        <fullName evidence="1">Seryl-tRNA(Ser/Sec) synthetase</fullName>
    </alternativeName>
</protein>
<comment type="function">
    <text evidence="1">Catalyzes the attachment of serine to tRNA(Ser). Is also able to aminoacylate tRNA(Sec) with serine, to form the misacylated tRNA L-seryl-tRNA(Sec), which will be further converted into selenocysteinyl-tRNA(Sec).</text>
</comment>
<comment type="catalytic activity">
    <reaction evidence="1">
        <text>tRNA(Ser) + L-serine + ATP = L-seryl-tRNA(Ser) + AMP + diphosphate + H(+)</text>
        <dbReference type="Rhea" id="RHEA:12292"/>
        <dbReference type="Rhea" id="RHEA-COMP:9669"/>
        <dbReference type="Rhea" id="RHEA-COMP:9703"/>
        <dbReference type="ChEBI" id="CHEBI:15378"/>
        <dbReference type="ChEBI" id="CHEBI:30616"/>
        <dbReference type="ChEBI" id="CHEBI:33019"/>
        <dbReference type="ChEBI" id="CHEBI:33384"/>
        <dbReference type="ChEBI" id="CHEBI:78442"/>
        <dbReference type="ChEBI" id="CHEBI:78533"/>
        <dbReference type="ChEBI" id="CHEBI:456215"/>
        <dbReference type="EC" id="6.1.1.11"/>
    </reaction>
</comment>
<comment type="catalytic activity">
    <reaction evidence="1">
        <text>tRNA(Sec) + L-serine + ATP = L-seryl-tRNA(Sec) + AMP + diphosphate + H(+)</text>
        <dbReference type="Rhea" id="RHEA:42580"/>
        <dbReference type="Rhea" id="RHEA-COMP:9742"/>
        <dbReference type="Rhea" id="RHEA-COMP:10128"/>
        <dbReference type="ChEBI" id="CHEBI:15378"/>
        <dbReference type="ChEBI" id="CHEBI:30616"/>
        <dbReference type="ChEBI" id="CHEBI:33019"/>
        <dbReference type="ChEBI" id="CHEBI:33384"/>
        <dbReference type="ChEBI" id="CHEBI:78442"/>
        <dbReference type="ChEBI" id="CHEBI:78533"/>
        <dbReference type="ChEBI" id="CHEBI:456215"/>
        <dbReference type="EC" id="6.1.1.11"/>
    </reaction>
</comment>
<comment type="pathway">
    <text evidence="1">Aminoacyl-tRNA biosynthesis; selenocysteinyl-tRNA(Sec) biosynthesis; L-seryl-tRNA(Sec) from L-serine and tRNA(Sec): step 1/1.</text>
</comment>
<comment type="subunit">
    <text evidence="1">Homodimer. The tRNA molecule binds across the dimer.</text>
</comment>
<comment type="subcellular location">
    <subcellularLocation>
        <location evidence="1">Cytoplasm</location>
    </subcellularLocation>
</comment>
<comment type="domain">
    <text evidence="1">Consists of two distinct domains, a catalytic core and a N-terminal extension that is involved in tRNA binding.</text>
</comment>
<comment type="similarity">
    <text evidence="1">Belongs to the class-II aminoacyl-tRNA synthetase family. Type-1 seryl-tRNA synthetase subfamily.</text>
</comment>
<evidence type="ECO:0000255" key="1">
    <source>
        <dbReference type="HAMAP-Rule" id="MF_00176"/>
    </source>
</evidence>
<organism>
    <name type="scientific">Sulfolobus acidocaldarius (strain ATCC 33909 / DSM 639 / JCM 8929 / NBRC 15157 / NCIMB 11770)</name>
    <dbReference type="NCBI Taxonomy" id="330779"/>
    <lineage>
        <taxon>Archaea</taxon>
        <taxon>Thermoproteota</taxon>
        <taxon>Thermoprotei</taxon>
        <taxon>Sulfolobales</taxon>
        <taxon>Sulfolobaceae</taxon>
        <taxon>Sulfolobus</taxon>
    </lineage>
</organism>
<keyword id="KW-0030">Aminoacyl-tRNA synthetase</keyword>
<keyword id="KW-0067">ATP-binding</keyword>
<keyword id="KW-0963">Cytoplasm</keyword>
<keyword id="KW-0436">Ligase</keyword>
<keyword id="KW-0547">Nucleotide-binding</keyword>
<keyword id="KW-0648">Protein biosynthesis</keyword>
<keyword id="KW-1185">Reference proteome</keyword>
<proteinExistence type="inferred from homology"/>
<name>SYS_SULAC</name>
<accession>Q4J8I4</accession>
<sequence>MSWSILELIRNNPEVLKENLKRRFIDTSTVDKAVELDKKWRQTLQEVERLRHEHNLISSQIPKAPKEQKSELINKAKELLKTLEDKEKELQKIEEERENLLLSLPNLVHDSVPIGPDESYSVPIRFWGKFKVYKDDVNEFLKQTNGHKVDYEVINWKPVGHADMLENVLRLGDTKKAGEVAASRFYYLFNDIVWLDLALLLYAIDTITSRGYTLVLPPYMLRGEVIKSVIDLDTFKDAIYKIEGEDLYLIATAEHSIAALYYKEEIPKEELPLKLVGVSPAFRKEAGAANKDLKGIFRVHQFHKVEQFIFSSPEDSWKYHEEMIENAEEIFRGLGLPYRVINIASGDLGAPAAKKYDLEVWMPAQAKFREMVSCSNCLDWQAYRMRIRYVEKNNKKGYLHTLNSTAIASTRAITAILENFQKEDGVVEVPKVLRKYLETFSGAPKEYIYPKKKPNTTS</sequence>
<feature type="chain" id="PRO_0000122184" description="Serine--tRNA ligase">
    <location>
        <begin position="1"/>
        <end position="458"/>
    </location>
</feature>
<feature type="binding site" evidence="1">
    <location>
        <begin position="252"/>
        <end position="254"/>
    </location>
    <ligand>
        <name>L-serine</name>
        <dbReference type="ChEBI" id="CHEBI:33384"/>
    </ligand>
</feature>
<feature type="binding site" evidence="1">
    <location>
        <begin position="283"/>
        <end position="285"/>
    </location>
    <ligand>
        <name>ATP</name>
        <dbReference type="ChEBI" id="CHEBI:30616"/>
    </ligand>
</feature>
<feature type="binding site" evidence="1">
    <location>
        <position position="299"/>
    </location>
    <ligand>
        <name>ATP</name>
        <dbReference type="ChEBI" id="CHEBI:30616"/>
    </ligand>
</feature>
<feature type="binding site" evidence="1">
    <location>
        <position position="306"/>
    </location>
    <ligand>
        <name>L-serine</name>
        <dbReference type="ChEBI" id="CHEBI:33384"/>
    </ligand>
</feature>
<feature type="binding site" evidence="1">
    <location>
        <begin position="370"/>
        <end position="373"/>
    </location>
    <ligand>
        <name>ATP</name>
        <dbReference type="ChEBI" id="CHEBI:30616"/>
    </ligand>
</feature>
<feature type="binding site" evidence="1">
    <location>
        <position position="405"/>
    </location>
    <ligand>
        <name>L-serine</name>
        <dbReference type="ChEBI" id="CHEBI:33384"/>
    </ligand>
</feature>